<protein>
    <recommendedName>
        <fullName>Ligand-gated ion channel 4</fullName>
    </recommendedName>
</protein>
<feature type="signal peptide" evidence="2">
    <location>
        <begin position="1"/>
        <end position="24"/>
    </location>
</feature>
<feature type="chain" id="PRO_0000000405" description="Ligand-gated ion channel 4">
    <location>
        <begin position="25"/>
        <end position="635"/>
    </location>
</feature>
<feature type="topological domain" description="Extracellular" evidence="2">
    <location>
        <begin position="25"/>
        <end position="324"/>
    </location>
</feature>
<feature type="transmembrane region" description="Helical" evidence="2">
    <location>
        <begin position="325"/>
        <end position="345"/>
    </location>
</feature>
<feature type="transmembrane region" description="Helical" evidence="2">
    <location>
        <begin position="355"/>
        <end position="375"/>
    </location>
</feature>
<feature type="transmembrane region" description="Helical" evidence="2">
    <location>
        <begin position="381"/>
        <end position="401"/>
    </location>
</feature>
<feature type="topological domain" description="Cytoplasmic" evidence="2">
    <location>
        <begin position="402"/>
        <end position="599"/>
    </location>
</feature>
<feature type="transmembrane region" description="Helical" evidence="2">
    <location>
        <begin position="600"/>
        <end position="620"/>
    </location>
</feature>
<feature type="glycosylation site" description="N-linked (GlcNAc...) asparagine" evidence="2">
    <location>
        <position position="46"/>
    </location>
</feature>
<feature type="glycosylation site" description="N-linked (GlcNAc...) asparagine" evidence="2">
    <location>
        <position position="139"/>
    </location>
</feature>
<feature type="glycosylation site" description="N-linked (GlcNAc...) asparagine" evidence="2">
    <location>
        <position position="177"/>
    </location>
</feature>
<feature type="glycosylation site" description="N-linked (GlcNAc...) asparagine" evidence="2">
    <location>
        <position position="225"/>
    </location>
</feature>
<feature type="glycosylation site" description="N-linked (GlcNAc...) asparagine" evidence="2">
    <location>
        <position position="282"/>
    </location>
</feature>
<feature type="glycosylation site" description="N-linked (GlcNAc...) asparagine" evidence="2">
    <location>
        <position position="625"/>
    </location>
</feature>
<feature type="disulfide bond" evidence="1">
    <location>
        <begin position="238"/>
        <end position="252"/>
    </location>
</feature>
<proteinExistence type="inferred from homology"/>
<keyword id="KW-1003">Cell membrane</keyword>
<keyword id="KW-1015">Disulfide bond</keyword>
<keyword id="KW-0325">Glycoprotein</keyword>
<keyword id="KW-0407">Ion channel</keyword>
<keyword id="KW-0406">Ion transport</keyword>
<keyword id="KW-1071">Ligand-gated ion channel</keyword>
<keyword id="KW-0472">Membrane</keyword>
<keyword id="KW-0628">Postsynaptic cell membrane</keyword>
<keyword id="KW-0675">Receptor</keyword>
<keyword id="KW-1185">Reference proteome</keyword>
<keyword id="KW-0732">Signal</keyword>
<keyword id="KW-0770">Synapse</keyword>
<keyword id="KW-0812">Transmembrane</keyword>
<keyword id="KW-1133">Transmembrane helix</keyword>
<keyword id="KW-0813">Transport</keyword>
<comment type="function">
    <text>Possible acetylcholine receptor.</text>
</comment>
<comment type="subcellular location">
    <subcellularLocation>
        <location evidence="1">Postsynaptic cell membrane</location>
        <topology evidence="1">Multi-pass membrane protein</topology>
    </subcellularLocation>
    <subcellularLocation>
        <location evidence="1">Cell membrane</location>
        <topology evidence="1">Multi-pass membrane protein</topology>
    </subcellularLocation>
</comment>
<comment type="similarity">
    <text evidence="3">Belongs to the ligand-gated ion channel (TC 1.A.9) family.</text>
</comment>
<accession>P54245</accession>
<gene>
    <name type="primary">lgc-4</name>
    <name type="ORF">F18G5.4</name>
</gene>
<sequence length="635" mass="72916">MIICYSCLTVSILLTIKFVPCRFAGIEHQNTKSRVHFSLLDSRQENDTNHFEIAEAKFQKPHNEENTIGTITKFAPSVQEQHSSAVIPMPHFDQNRLEQALRIKGSIDGTEEALYRSLLDHTVYEKDVRPCIHHSQPTNVTFGFLLNQIVEMDERNQALTTRSWLNINWMDPRLSWNESLWSEIKAIYIPHARIWKPDIILVNNAIREYYASLVSTDVMVTSDGNVTWLFSALFRSSCPIRVRYYPFDDQQCDLKFASWSHDITEINLGLNTDKGDLSSYMNNSEFDLVDMTAVREVVTFPSDTNSDWPIIVIRIHMHRRPLFYVFNHIVPCVLISSMAVLGFLMPPETGEKINMIITTLLSMGVYLQSITESIPPTSEGVPLIGMYYVSSLLMVCLATCVNVITLNMHRNGAANQGRHVPAWMQKWILGYLATFMRMSIREPDSIALLKASQSKKSTIRRSSILRDLKRVKNMSNVRAKSKEQNANRECECMDPLVHIYAESIMSCLAADTKPMNGSTIREDFASESTFLGRVVSDGIMPRISASSNSVLTEFETRFRRILKRVYRSLQQHEIREEILDERSRIQWQWQQLASVVDRLLLCLFCTATLFTIICLLIVPVAYRDNDSMLSFLNFF</sequence>
<evidence type="ECO:0000250" key="1"/>
<evidence type="ECO:0000255" key="2"/>
<evidence type="ECO:0000305" key="3"/>
<reference key="1">
    <citation type="journal article" date="1998" name="Science">
        <title>Genome sequence of the nematode C. elegans: a platform for investigating biology.</title>
        <authorList>
            <consortium name="The C. elegans sequencing consortium"/>
        </authorList>
    </citation>
    <scope>NUCLEOTIDE SEQUENCE [LARGE SCALE GENOMIC DNA]</scope>
    <source>
        <strain>Bristol N2</strain>
    </source>
</reference>
<reference key="2">
    <citation type="journal article" date="2007" name="Invertebr. Neurosci.">
        <title>The nicotinic acetylcholine receptor gene family of the nematode Caenorhabditis elegans: an update on nomenclature.</title>
        <authorList>
            <person name="Jones A.K."/>
            <person name="Davis P."/>
            <person name="Hodgkin J."/>
            <person name="Sattelle D.B."/>
        </authorList>
    </citation>
    <scope>IDENTIFICATION</scope>
</reference>
<dbReference type="EMBL" id="FO080202">
    <property type="protein sequence ID" value="CCD61933.1"/>
    <property type="molecule type" value="Genomic_DNA"/>
</dbReference>
<dbReference type="PIR" id="A89606">
    <property type="entry name" value="A89606"/>
</dbReference>
<dbReference type="RefSeq" id="NP_509556.4">
    <property type="nucleotide sequence ID" value="NM_077155.4"/>
</dbReference>
<dbReference type="SMR" id="P54245"/>
<dbReference type="BioGRID" id="46072">
    <property type="interactions" value="2"/>
</dbReference>
<dbReference type="FunCoup" id="P54245">
    <property type="interactions" value="68"/>
</dbReference>
<dbReference type="STRING" id="6239.F18G5.4.1"/>
<dbReference type="GlyCosmos" id="P54245">
    <property type="glycosylation" value="6 sites, No reported glycans"/>
</dbReference>
<dbReference type="PaxDb" id="6239-F18G5.4"/>
<dbReference type="EnsemblMetazoa" id="F18G5.4.1">
    <property type="protein sequence ID" value="F18G5.4.1"/>
    <property type="gene ID" value="WBGene00017580"/>
</dbReference>
<dbReference type="GeneID" id="181155"/>
<dbReference type="KEGG" id="cel:CELE_F18G5.4"/>
<dbReference type="AGR" id="WB:WBGene00017580"/>
<dbReference type="CTD" id="181155"/>
<dbReference type="WormBase" id="F18G5.4">
    <property type="protein sequence ID" value="CE45725"/>
    <property type="gene ID" value="WBGene00017580"/>
    <property type="gene designation" value="lgc-4"/>
</dbReference>
<dbReference type="eggNOG" id="KOG3645">
    <property type="taxonomic scope" value="Eukaryota"/>
</dbReference>
<dbReference type="HOGENOM" id="CLU_018074_0_3_1"/>
<dbReference type="InParanoid" id="P54245"/>
<dbReference type="OMA" id="IVIRIHM"/>
<dbReference type="OrthoDB" id="5975154at2759"/>
<dbReference type="PhylomeDB" id="P54245"/>
<dbReference type="Reactome" id="R-CEL-112314">
    <property type="pathway name" value="Neurotransmitter receptors and postsynaptic signal transmission"/>
</dbReference>
<dbReference type="Reactome" id="R-CEL-629594">
    <property type="pathway name" value="Highly calcium permeable postsynaptic nicotinic acetylcholine receptors"/>
</dbReference>
<dbReference type="PRO" id="PR:P54245"/>
<dbReference type="Proteomes" id="UP000001940">
    <property type="component" value="Chromosome X"/>
</dbReference>
<dbReference type="Bgee" id="WBGene00017580">
    <property type="expression patterns" value="Expressed in larva and 3 other cell types or tissues"/>
</dbReference>
<dbReference type="GO" id="GO:0043005">
    <property type="term" value="C:neuron projection"/>
    <property type="evidence" value="ECO:0000318"/>
    <property type="project" value="GO_Central"/>
</dbReference>
<dbReference type="GO" id="GO:0005886">
    <property type="term" value="C:plasma membrane"/>
    <property type="evidence" value="ECO:0000318"/>
    <property type="project" value="GO_Central"/>
</dbReference>
<dbReference type="GO" id="GO:0045211">
    <property type="term" value="C:postsynaptic membrane"/>
    <property type="evidence" value="ECO:0007669"/>
    <property type="project" value="UniProtKB-SubCell"/>
</dbReference>
<dbReference type="GO" id="GO:0045202">
    <property type="term" value="C:synapse"/>
    <property type="evidence" value="ECO:0000318"/>
    <property type="project" value="GO_Central"/>
</dbReference>
<dbReference type="GO" id="GO:1902495">
    <property type="term" value="C:transmembrane transporter complex"/>
    <property type="evidence" value="ECO:0000318"/>
    <property type="project" value="GO_Central"/>
</dbReference>
<dbReference type="GO" id="GO:0022848">
    <property type="term" value="F:acetylcholine-gated monoatomic cation-selective channel activity"/>
    <property type="evidence" value="ECO:0007669"/>
    <property type="project" value="InterPro"/>
</dbReference>
<dbReference type="GO" id="GO:0005231">
    <property type="term" value="F:excitatory extracellular ligand-gated monoatomic ion channel activity"/>
    <property type="evidence" value="ECO:0000318"/>
    <property type="project" value="GO_Central"/>
</dbReference>
<dbReference type="GO" id="GO:0004888">
    <property type="term" value="F:transmembrane signaling receptor activity"/>
    <property type="evidence" value="ECO:0007669"/>
    <property type="project" value="InterPro"/>
</dbReference>
<dbReference type="GO" id="GO:1904315">
    <property type="term" value="F:transmitter-gated monoatomic ion channel activity involved in regulation of postsynaptic membrane potential"/>
    <property type="evidence" value="ECO:0000318"/>
    <property type="project" value="GO_Central"/>
</dbReference>
<dbReference type="GO" id="GO:0007268">
    <property type="term" value="P:chemical synaptic transmission"/>
    <property type="evidence" value="ECO:0000318"/>
    <property type="project" value="GO_Central"/>
</dbReference>
<dbReference type="GO" id="GO:0034220">
    <property type="term" value="P:monoatomic ion transmembrane transport"/>
    <property type="evidence" value="ECO:0000318"/>
    <property type="project" value="GO_Central"/>
</dbReference>
<dbReference type="GO" id="GO:0042391">
    <property type="term" value="P:regulation of membrane potential"/>
    <property type="evidence" value="ECO:0000318"/>
    <property type="project" value="GO_Central"/>
</dbReference>
<dbReference type="CDD" id="cd18997">
    <property type="entry name" value="LGIC_ECD_nAChR"/>
    <property type="match status" value="1"/>
</dbReference>
<dbReference type="CDD" id="cd19051">
    <property type="entry name" value="LGIC_TM_cation"/>
    <property type="match status" value="1"/>
</dbReference>
<dbReference type="FunFam" id="1.20.58.390:FF:000043">
    <property type="entry name" value="AcetylCholine Receptor"/>
    <property type="match status" value="1"/>
</dbReference>
<dbReference type="FunFam" id="2.70.170.10:FF:000061">
    <property type="entry name" value="Ligand-gated ion channel 4"/>
    <property type="match status" value="1"/>
</dbReference>
<dbReference type="Gene3D" id="2.70.170.10">
    <property type="entry name" value="Neurotransmitter-gated ion-channel ligand-binding domain"/>
    <property type="match status" value="1"/>
</dbReference>
<dbReference type="Gene3D" id="1.20.58.390">
    <property type="entry name" value="Neurotransmitter-gated ion-channel transmembrane domain"/>
    <property type="match status" value="1"/>
</dbReference>
<dbReference type="InterPro" id="IPR006202">
    <property type="entry name" value="Neur_chan_lig-bd"/>
</dbReference>
<dbReference type="InterPro" id="IPR036734">
    <property type="entry name" value="Neur_chan_lig-bd_sf"/>
</dbReference>
<dbReference type="InterPro" id="IPR006201">
    <property type="entry name" value="Neur_channel"/>
</dbReference>
<dbReference type="InterPro" id="IPR036719">
    <property type="entry name" value="Neuro-gated_channel_TM_sf"/>
</dbReference>
<dbReference type="InterPro" id="IPR038050">
    <property type="entry name" value="Neuro_actylchol_rec"/>
</dbReference>
<dbReference type="InterPro" id="IPR006029">
    <property type="entry name" value="Neurotrans-gated_channel_TM"/>
</dbReference>
<dbReference type="InterPro" id="IPR018000">
    <property type="entry name" value="Neurotransmitter_ion_chnl_CS"/>
</dbReference>
<dbReference type="InterPro" id="IPR002394">
    <property type="entry name" value="Nicotinic_acetylcholine_rcpt"/>
</dbReference>
<dbReference type="NCBIfam" id="TIGR00860">
    <property type="entry name" value="LIC"/>
    <property type="match status" value="1"/>
</dbReference>
<dbReference type="PANTHER" id="PTHR18945">
    <property type="entry name" value="NEUROTRANSMITTER GATED ION CHANNEL"/>
    <property type="match status" value="1"/>
</dbReference>
<dbReference type="Pfam" id="PF02931">
    <property type="entry name" value="Neur_chan_LBD"/>
    <property type="match status" value="1"/>
</dbReference>
<dbReference type="Pfam" id="PF02932">
    <property type="entry name" value="Neur_chan_memb"/>
    <property type="match status" value="1"/>
</dbReference>
<dbReference type="PRINTS" id="PR00254">
    <property type="entry name" value="NICOTINICR"/>
</dbReference>
<dbReference type="PRINTS" id="PR00252">
    <property type="entry name" value="NRIONCHANNEL"/>
</dbReference>
<dbReference type="SUPFAM" id="SSF90112">
    <property type="entry name" value="Neurotransmitter-gated ion-channel transmembrane pore"/>
    <property type="match status" value="1"/>
</dbReference>
<dbReference type="SUPFAM" id="SSF63712">
    <property type="entry name" value="Nicotinic receptor ligand binding domain-like"/>
    <property type="match status" value="1"/>
</dbReference>
<dbReference type="PROSITE" id="PS00236">
    <property type="entry name" value="NEUROTR_ION_CHANNEL"/>
    <property type="match status" value="1"/>
</dbReference>
<organism>
    <name type="scientific">Caenorhabditis elegans</name>
    <dbReference type="NCBI Taxonomy" id="6239"/>
    <lineage>
        <taxon>Eukaryota</taxon>
        <taxon>Metazoa</taxon>
        <taxon>Ecdysozoa</taxon>
        <taxon>Nematoda</taxon>
        <taxon>Chromadorea</taxon>
        <taxon>Rhabditida</taxon>
        <taxon>Rhabditina</taxon>
        <taxon>Rhabditomorpha</taxon>
        <taxon>Rhabditoidea</taxon>
        <taxon>Rhabditidae</taxon>
        <taxon>Peloderinae</taxon>
        <taxon>Caenorhabditis</taxon>
    </lineage>
</organism>
<name>LGC4_CAEEL</name>